<feature type="initiator methionine" description="Removed" evidence="7">
    <location>
        <position position="1"/>
    </location>
</feature>
<feature type="chain" id="PRO_0000186364" description="Dihydrofolate reductase">
    <location>
        <begin position="2"/>
        <end position="187"/>
    </location>
</feature>
<feature type="domain" description="DHFR" evidence="2">
    <location>
        <begin position="4"/>
        <end position="185"/>
    </location>
</feature>
<feature type="binding site" evidence="3 4">
    <location>
        <position position="10"/>
    </location>
    <ligand>
        <name>NADP(+)</name>
        <dbReference type="ChEBI" id="CHEBI:58349"/>
    </ligand>
</feature>
<feature type="binding site" evidence="3 4">
    <location>
        <begin position="16"/>
        <end position="22"/>
    </location>
    <ligand>
        <name>NADP(+)</name>
        <dbReference type="ChEBI" id="CHEBI:58349"/>
    </ligand>
</feature>
<feature type="binding site" evidence="9">
    <location>
        <begin position="31"/>
        <end position="36"/>
    </location>
    <ligand>
        <name>substrate</name>
    </ligand>
</feature>
<feature type="binding site" evidence="3 4">
    <location>
        <begin position="55"/>
        <end position="57"/>
    </location>
    <ligand>
        <name>NADP(+)</name>
        <dbReference type="ChEBI" id="CHEBI:58349"/>
    </ligand>
</feature>
<feature type="binding site" evidence="9">
    <location>
        <position position="65"/>
    </location>
    <ligand>
        <name>substrate</name>
    </ligand>
</feature>
<feature type="binding site" evidence="9">
    <location>
        <position position="71"/>
    </location>
    <ligand>
        <name>substrate</name>
    </ligand>
</feature>
<feature type="binding site" evidence="3 4">
    <location>
        <begin position="77"/>
        <end position="79"/>
    </location>
    <ligand>
        <name>NADP(+)</name>
        <dbReference type="ChEBI" id="CHEBI:58349"/>
    </ligand>
</feature>
<feature type="binding site" evidence="3 4">
    <location>
        <begin position="117"/>
        <end position="124"/>
    </location>
    <ligand>
        <name>NADP(+)</name>
        <dbReference type="ChEBI" id="CHEBI:58349"/>
    </ligand>
</feature>
<feature type="modified residue" description="N6-acetyllysine; alternate" evidence="10">
    <location>
        <position position="33"/>
    </location>
</feature>
<feature type="modified residue" description="N6-succinyllysine; alternate" evidence="10">
    <location>
        <position position="33"/>
    </location>
</feature>
<feature type="sequence variant" description="In a form with an abnormally low affinity for methotrexate." evidence="3">
    <original>L</original>
    <variation>R</variation>
    <location>
        <position position="23"/>
    </location>
</feature>
<feature type="sequence variant" description="In L-5178-Y cell line; methotrexate-resistant; requires 2 nucleotide substitutions.">
    <original>F</original>
    <variation>W</variation>
    <location>
        <position position="32"/>
    </location>
</feature>
<feature type="sequence conflict" description="In Ref. 6; AAA37637." evidence="8" ref="6">
    <original>P</original>
    <variation>A</variation>
    <location>
        <position position="4"/>
    </location>
</feature>
<feature type="sequence conflict" description="In Ref. 3; CAA39544." evidence="8" ref="3">
    <original>N</original>
    <variation>D</variation>
    <location>
        <position position="14"/>
    </location>
</feature>
<feature type="sequence conflict" description="In Ref. 5; AA sequence and 8; AAA37525." evidence="8" ref="5 8">
    <original>Q</original>
    <variation>E</variation>
    <location>
        <position position="123"/>
    </location>
</feature>
<feature type="sequence conflict" description="In Ref. 5; AA sequence." evidence="8" ref="5">
    <original>E</original>
    <variation>Q</variation>
    <location>
        <position position="124"/>
    </location>
</feature>
<feature type="sequence conflict" description="In Ref. 5; AA sequence." evidence="8" ref="5">
    <original>Q</original>
    <variation>E</variation>
    <location>
        <position position="128"/>
    </location>
</feature>
<feature type="sequence conflict" description="In Ref. 5; AA sequence." evidence="8" ref="5">
    <original>K</original>
    <variation>D</variation>
    <location>
        <position position="174"/>
    </location>
</feature>
<feature type="strand" evidence="13">
    <location>
        <begin position="4"/>
        <end position="11"/>
    </location>
</feature>
<feature type="strand" evidence="13">
    <location>
        <begin position="15"/>
        <end position="19"/>
    </location>
</feature>
<feature type="strand" evidence="13">
    <location>
        <begin position="24"/>
        <end position="26"/>
    </location>
</feature>
<feature type="helix" evidence="13">
    <location>
        <begin position="29"/>
        <end position="40"/>
    </location>
</feature>
<feature type="strand" evidence="11">
    <location>
        <begin position="43"/>
        <end position="46"/>
    </location>
</feature>
<feature type="strand" evidence="13">
    <location>
        <begin position="50"/>
        <end position="54"/>
    </location>
</feature>
<feature type="helix" evidence="13">
    <location>
        <begin position="55"/>
        <end position="60"/>
    </location>
</feature>
<feature type="helix" evidence="13">
    <location>
        <begin position="63"/>
        <end position="65"/>
    </location>
</feature>
<feature type="strand" evidence="13">
    <location>
        <begin position="71"/>
        <end position="76"/>
    </location>
</feature>
<feature type="strand" evidence="13">
    <location>
        <begin position="88"/>
        <end position="93"/>
    </location>
</feature>
<feature type="helix" evidence="13">
    <location>
        <begin position="94"/>
        <end position="101"/>
    </location>
</feature>
<feature type="helix" evidence="13">
    <location>
        <begin position="104"/>
        <end position="109"/>
    </location>
</feature>
<feature type="strand" evidence="13">
    <location>
        <begin position="113"/>
        <end position="115"/>
    </location>
</feature>
<feature type="helix" evidence="13">
    <location>
        <begin position="119"/>
        <end position="126"/>
    </location>
</feature>
<feature type="strand" evidence="13">
    <location>
        <begin position="128"/>
        <end position="130"/>
    </location>
</feature>
<feature type="strand" evidence="13">
    <location>
        <begin position="132"/>
        <end position="139"/>
    </location>
</feature>
<feature type="strand" evidence="13">
    <location>
        <begin position="146"/>
        <end position="148"/>
    </location>
</feature>
<feature type="turn" evidence="13">
    <location>
        <begin position="154"/>
        <end position="156"/>
    </location>
</feature>
<feature type="strand" evidence="12">
    <location>
        <begin position="157"/>
        <end position="159"/>
    </location>
</feature>
<feature type="strand" evidence="13">
    <location>
        <begin position="171"/>
        <end position="173"/>
    </location>
</feature>
<feature type="strand" evidence="13">
    <location>
        <begin position="176"/>
        <end position="185"/>
    </location>
</feature>
<keyword id="KW-0002">3D-structure</keyword>
<keyword id="KW-0007">Acetylation</keyword>
<keyword id="KW-0963">Cytoplasm</keyword>
<keyword id="KW-0903">Direct protein sequencing</keyword>
<keyword id="KW-0487">Methotrexate resistance</keyword>
<keyword id="KW-0496">Mitochondrion</keyword>
<keyword id="KW-0521">NADP</keyword>
<keyword id="KW-0554">One-carbon metabolism</keyword>
<keyword id="KW-0560">Oxidoreductase</keyword>
<keyword id="KW-1185">Reference proteome</keyword>
<keyword id="KW-0694">RNA-binding</keyword>
<gene>
    <name type="primary">Dhfr</name>
</gene>
<proteinExistence type="evidence at protein level"/>
<comment type="function">
    <text evidence="1 6">Key enzyme in folate metabolism. Contributes to the de novo mitochondrial thymidylate biosynthesis pathway (PubMed:25980602). Catalyzes an essential reaction for de novo glycine and purine synthesis, and for DNA precursor synthesis (PubMed:25980602). Binds its own mRNA.</text>
</comment>
<comment type="catalytic activity">
    <reaction evidence="2 5 6">
        <text>(6S)-5,6,7,8-tetrahydrofolate + NADP(+) = 7,8-dihydrofolate + NADPH + H(+)</text>
        <dbReference type="Rhea" id="RHEA:15009"/>
        <dbReference type="ChEBI" id="CHEBI:15378"/>
        <dbReference type="ChEBI" id="CHEBI:57451"/>
        <dbReference type="ChEBI" id="CHEBI:57453"/>
        <dbReference type="ChEBI" id="CHEBI:57783"/>
        <dbReference type="ChEBI" id="CHEBI:58349"/>
        <dbReference type="EC" id="1.5.1.3"/>
    </reaction>
</comment>
<comment type="pathway">
    <text>Cofactor biosynthesis; tetrahydrofolate biosynthesis; 5,6,7,8-tetrahydrofolate from 7,8-dihydrofolate: step 1/1.</text>
</comment>
<comment type="subunit">
    <text evidence="1">Homodimer.</text>
</comment>
<comment type="subcellular location">
    <subcellularLocation>
        <location evidence="6">Mitochondrion</location>
    </subcellularLocation>
    <subcellularLocation>
        <location evidence="6">Cytoplasm</location>
    </subcellularLocation>
</comment>
<comment type="similarity">
    <text evidence="8">Belongs to the dihydrofolate reductase family.</text>
</comment>
<organism>
    <name type="scientific">Mus musculus</name>
    <name type="common">Mouse</name>
    <dbReference type="NCBI Taxonomy" id="10090"/>
    <lineage>
        <taxon>Eukaryota</taxon>
        <taxon>Metazoa</taxon>
        <taxon>Chordata</taxon>
        <taxon>Craniata</taxon>
        <taxon>Vertebrata</taxon>
        <taxon>Euteleostomi</taxon>
        <taxon>Mammalia</taxon>
        <taxon>Eutheria</taxon>
        <taxon>Euarchontoglires</taxon>
        <taxon>Glires</taxon>
        <taxon>Rodentia</taxon>
        <taxon>Myomorpha</taxon>
        <taxon>Muroidea</taxon>
        <taxon>Muridae</taxon>
        <taxon>Murinae</taxon>
        <taxon>Mus</taxon>
        <taxon>Mus</taxon>
    </lineage>
</organism>
<sequence length="187" mass="21606">MVRPLNCIVAVSQNMGIGKNGDLPWPPLRNEFKYFQRMTTTSSVEGKQNLVIMGRKTWFSIPEKNRPLKDRINIVLSRELKEPPRGAHFLAKSLDDALRLIEQPELASKVDMVWIVGGSSVYQEAMNQPGHLRLFVTRIMQEFESDTFFPEIDLGKYKLLPEYPGVLSEVQEEKGIKYKFEVYEKKD</sequence>
<evidence type="ECO:0000250" key="1">
    <source>
        <dbReference type="UniProtKB" id="P00374"/>
    </source>
</evidence>
<evidence type="ECO:0000255" key="2">
    <source>
        <dbReference type="PROSITE-ProRule" id="PRU00660"/>
    </source>
</evidence>
<evidence type="ECO:0000269" key="3">
    <source>
    </source>
</evidence>
<evidence type="ECO:0000269" key="4">
    <source>
    </source>
</evidence>
<evidence type="ECO:0000269" key="5">
    <source>
    </source>
</evidence>
<evidence type="ECO:0000269" key="6">
    <source>
    </source>
</evidence>
<evidence type="ECO:0000269" key="7">
    <source>
    </source>
</evidence>
<evidence type="ECO:0000305" key="8"/>
<evidence type="ECO:0000305" key="9">
    <source>
    </source>
</evidence>
<evidence type="ECO:0007744" key="10">
    <source>
    </source>
</evidence>
<evidence type="ECO:0007829" key="11">
    <source>
        <dbReference type="PDB" id="1U70"/>
    </source>
</evidence>
<evidence type="ECO:0007829" key="12">
    <source>
        <dbReference type="PDB" id="2FZJ"/>
    </source>
</evidence>
<evidence type="ECO:0007829" key="13">
    <source>
        <dbReference type="PDB" id="3D80"/>
    </source>
</evidence>
<protein>
    <recommendedName>
        <fullName>Dihydrofolate reductase</fullName>
        <ecNumber evidence="5 6">1.5.1.3</ecNumber>
    </recommendedName>
</protein>
<dbReference type="EC" id="1.5.1.3" evidence="5 6"/>
<dbReference type="EMBL" id="V00734">
    <property type="protein sequence ID" value="CAA24112.1"/>
    <property type="molecule type" value="mRNA"/>
</dbReference>
<dbReference type="EMBL" id="X56066">
    <property type="protein sequence ID" value="CAA39544.1"/>
    <property type="molecule type" value="mRNA"/>
</dbReference>
<dbReference type="EMBL" id="BC005796">
    <property type="protein sequence ID" value="AAH05796.1"/>
    <property type="molecule type" value="mRNA"/>
</dbReference>
<dbReference type="EMBL" id="M10071">
    <property type="protein sequence ID" value="AAA37637.1"/>
    <property type="molecule type" value="Genomic_DNA"/>
</dbReference>
<dbReference type="EMBL" id="L26316">
    <property type="protein sequence ID" value="AAA37523.1"/>
    <property type="molecule type" value="mRNA"/>
</dbReference>
<dbReference type="EMBL" id="J00387">
    <property type="protein sequence ID" value="AAA37638.1"/>
    <property type="molecule type" value="Genomic_DNA"/>
</dbReference>
<dbReference type="EMBL" id="J00382">
    <property type="protein sequence ID" value="AAA37638.1"/>
    <property type="status" value="JOINED"/>
    <property type="molecule type" value="Genomic_DNA"/>
</dbReference>
<dbReference type="EMBL" id="J00383">
    <property type="protein sequence ID" value="AAA37638.1"/>
    <property type="status" value="JOINED"/>
    <property type="molecule type" value="Genomic_DNA"/>
</dbReference>
<dbReference type="EMBL" id="J00384">
    <property type="protein sequence ID" value="AAA37638.1"/>
    <property type="status" value="JOINED"/>
    <property type="molecule type" value="Genomic_DNA"/>
</dbReference>
<dbReference type="EMBL" id="J00385">
    <property type="protein sequence ID" value="AAA37638.1"/>
    <property type="status" value="JOINED"/>
    <property type="molecule type" value="Genomic_DNA"/>
</dbReference>
<dbReference type="EMBL" id="J00386">
    <property type="protein sequence ID" value="AAA37638.1"/>
    <property type="status" value="JOINED"/>
    <property type="molecule type" value="Genomic_DNA"/>
</dbReference>
<dbReference type="EMBL" id="V00731">
    <property type="protein sequence ID" value="CAB43539.2"/>
    <property type="molecule type" value="mRNA"/>
</dbReference>
<dbReference type="EMBL" id="M10722">
    <property type="protein sequence ID" value="AAA37524.1"/>
    <property type="molecule type" value="mRNA"/>
</dbReference>
<dbReference type="EMBL" id="M10811">
    <property type="protein sequence ID" value="AAA37525.1"/>
    <property type="molecule type" value="mRNA"/>
</dbReference>
<dbReference type="EMBL" id="V00733">
    <property type="protein sequence ID" value="CAA24111.1"/>
    <property type="molecule type" value="Genomic_DNA"/>
</dbReference>
<dbReference type="CCDS" id="CCDS26680.1"/>
<dbReference type="PIR" id="S13096">
    <property type="entry name" value="RDMSD"/>
</dbReference>
<dbReference type="RefSeq" id="NP_034179.1">
    <property type="nucleotide sequence ID" value="NM_010049.3"/>
</dbReference>
<dbReference type="PDB" id="1U70">
    <property type="method" value="X-ray"/>
    <property type="resolution" value="2.50 A"/>
    <property type="chains" value="A=2-187"/>
</dbReference>
<dbReference type="PDB" id="2FZJ">
    <property type="method" value="X-ray"/>
    <property type="resolution" value="2.00 A"/>
    <property type="chains" value="A=2-187"/>
</dbReference>
<dbReference type="PDB" id="3D80">
    <property type="method" value="X-ray"/>
    <property type="resolution" value="1.40 A"/>
    <property type="chains" value="A=2-187"/>
</dbReference>
<dbReference type="PDB" id="3D84">
    <property type="method" value="X-ray"/>
    <property type="resolution" value="1.90 A"/>
    <property type="chains" value="X=2-187"/>
</dbReference>
<dbReference type="PDB" id="3K45">
    <property type="method" value="X-ray"/>
    <property type="resolution" value="1.60 A"/>
    <property type="chains" value="A=2-187"/>
</dbReference>
<dbReference type="PDB" id="3K47">
    <property type="method" value="X-ray"/>
    <property type="resolution" value="2.05 A"/>
    <property type="chains" value="A=2-187"/>
</dbReference>
<dbReference type="PDBsum" id="1U70"/>
<dbReference type="PDBsum" id="2FZJ"/>
<dbReference type="PDBsum" id="3D80"/>
<dbReference type="PDBsum" id="3D84"/>
<dbReference type="PDBsum" id="3K45"/>
<dbReference type="PDBsum" id="3K47"/>
<dbReference type="SMR" id="P00375"/>
<dbReference type="BioGRID" id="199218">
    <property type="interactions" value="12"/>
</dbReference>
<dbReference type="FunCoup" id="P00375">
    <property type="interactions" value="1962"/>
</dbReference>
<dbReference type="IntAct" id="P00375">
    <property type="interactions" value="2"/>
</dbReference>
<dbReference type="MINT" id="P00375"/>
<dbReference type="STRING" id="10090.ENSMUSP00000022218"/>
<dbReference type="BindingDB" id="P00375"/>
<dbReference type="ChEMBL" id="CHEMBL4564"/>
<dbReference type="DrugCentral" id="P00375"/>
<dbReference type="iPTMnet" id="P00375"/>
<dbReference type="PhosphoSitePlus" id="P00375"/>
<dbReference type="jPOST" id="P00375"/>
<dbReference type="PaxDb" id="10090-ENSMUSP00000022218"/>
<dbReference type="PeptideAtlas" id="P00375"/>
<dbReference type="ProteomicsDB" id="277658"/>
<dbReference type="Pumba" id="P00375"/>
<dbReference type="DNASU" id="13361"/>
<dbReference type="Ensembl" id="ENSMUST00000022218.6">
    <property type="protein sequence ID" value="ENSMUSP00000022218.5"/>
    <property type="gene ID" value="ENSMUSG00000021707.6"/>
</dbReference>
<dbReference type="GeneID" id="13361"/>
<dbReference type="KEGG" id="mmu:13361"/>
<dbReference type="UCSC" id="uc007rkl.1">
    <property type="organism name" value="mouse"/>
</dbReference>
<dbReference type="AGR" id="MGI:94890"/>
<dbReference type="CTD" id="1719"/>
<dbReference type="MGI" id="MGI:94890">
    <property type="gene designation" value="Dhfr"/>
</dbReference>
<dbReference type="VEuPathDB" id="HostDB:ENSMUSG00000021707"/>
<dbReference type="eggNOG" id="KOG1324">
    <property type="taxonomic scope" value="Eukaryota"/>
</dbReference>
<dbReference type="GeneTree" id="ENSGT00390000010283"/>
<dbReference type="HOGENOM" id="CLU_043966_2_3_1"/>
<dbReference type="InParanoid" id="P00375"/>
<dbReference type="OMA" id="RDNQLPW"/>
<dbReference type="OrthoDB" id="4664297at2759"/>
<dbReference type="PhylomeDB" id="P00375"/>
<dbReference type="TreeFam" id="TF317636"/>
<dbReference type="BRENDA" id="1.5.1.3">
    <property type="organism ID" value="3474"/>
</dbReference>
<dbReference type="Reactome" id="R-MMU-196757">
    <property type="pathway name" value="Metabolism of folate and pterines"/>
</dbReference>
<dbReference type="SABIO-RK" id="P00375"/>
<dbReference type="UniPathway" id="UPA00077">
    <property type="reaction ID" value="UER00158"/>
</dbReference>
<dbReference type="BioGRID-ORCS" id="13361">
    <property type="hits" value="26 hits in 78 CRISPR screens"/>
</dbReference>
<dbReference type="ChiTaRS" id="Dhfr">
    <property type="organism name" value="mouse"/>
</dbReference>
<dbReference type="EvolutionaryTrace" id="P00375"/>
<dbReference type="PRO" id="PR:P00375"/>
<dbReference type="Proteomes" id="UP000000589">
    <property type="component" value="Chromosome 13"/>
</dbReference>
<dbReference type="RNAct" id="P00375">
    <property type="molecule type" value="protein"/>
</dbReference>
<dbReference type="Bgee" id="ENSMUSG00000021707">
    <property type="expression patterns" value="Expressed in optic fissure and 250 other cell types or tissues"/>
</dbReference>
<dbReference type="ExpressionAtlas" id="P00375">
    <property type="expression patterns" value="baseline and differential"/>
</dbReference>
<dbReference type="GO" id="GO:0005737">
    <property type="term" value="C:cytoplasm"/>
    <property type="evidence" value="ECO:0000314"/>
    <property type="project" value="UniProtKB"/>
</dbReference>
<dbReference type="GO" id="GO:0005829">
    <property type="term" value="C:cytosol"/>
    <property type="evidence" value="ECO:0000314"/>
    <property type="project" value="MGI"/>
</dbReference>
<dbReference type="GO" id="GO:0005739">
    <property type="term" value="C:mitochondrion"/>
    <property type="evidence" value="ECO:0000314"/>
    <property type="project" value="UniProtKB"/>
</dbReference>
<dbReference type="GO" id="GO:0005634">
    <property type="term" value="C:nucleus"/>
    <property type="evidence" value="ECO:0000314"/>
    <property type="project" value="MGI"/>
</dbReference>
<dbReference type="GO" id="GO:0004146">
    <property type="term" value="F:dihydrofolate reductase activity"/>
    <property type="evidence" value="ECO:0000314"/>
    <property type="project" value="UniProtKB"/>
</dbReference>
<dbReference type="GO" id="GO:0033560">
    <property type="term" value="F:folate reductase activity"/>
    <property type="evidence" value="ECO:0000314"/>
    <property type="project" value="MGI"/>
</dbReference>
<dbReference type="GO" id="GO:0003729">
    <property type="term" value="F:mRNA binding"/>
    <property type="evidence" value="ECO:0000250"/>
    <property type="project" value="UniProtKB"/>
</dbReference>
<dbReference type="GO" id="GO:0050661">
    <property type="term" value="F:NADP binding"/>
    <property type="evidence" value="ECO:0007669"/>
    <property type="project" value="InterPro"/>
</dbReference>
<dbReference type="GO" id="GO:0016646">
    <property type="term" value="F:oxidoreductase activity, acting on the CH-NH group of donors, NAD or NADP as acceptor"/>
    <property type="evidence" value="ECO:0000315"/>
    <property type="project" value="MGI"/>
</dbReference>
<dbReference type="GO" id="GO:2000121">
    <property type="term" value="P:regulation of removal of superoxide radicals"/>
    <property type="evidence" value="ECO:0000315"/>
    <property type="project" value="BHF-UCL"/>
</dbReference>
<dbReference type="GO" id="GO:0031427">
    <property type="term" value="P:response to methotrexate"/>
    <property type="evidence" value="ECO:0007669"/>
    <property type="project" value="UniProtKB-KW"/>
</dbReference>
<dbReference type="GO" id="GO:0006729">
    <property type="term" value="P:tetrahydrobiopterin biosynthetic process"/>
    <property type="evidence" value="ECO:0000315"/>
    <property type="project" value="BHF-UCL"/>
</dbReference>
<dbReference type="GO" id="GO:0046654">
    <property type="term" value="P:tetrahydrofolate biosynthetic process"/>
    <property type="evidence" value="ECO:0000314"/>
    <property type="project" value="MGI"/>
</dbReference>
<dbReference type="GO" id="GO:0035999">
    <property type="term" value="P:tetrahydrofolate interconversion"/>
    <property type="evidence" value="ECO:0000314"/>
    <property type="project" value="MGI"/>
</dbReference>
<dbReference type="GO" id="GO:0046653">
    <property type="term" value="P:tetrahydrofolate metabolic process"/>
    <property type="evidence" value="ECO:0000250"/>
    <property type="project" value="UniProtKB"/>
</dbReference>
<dbReference type="CDD" id="cd00209">
    <property type="entry name" value="DHFR"/>
    <property type="match status" value="1"/>
</dbReference>
<dbReference type="FunFam" id="3.40.430.10:FF:000002">
    <property type="entry name" value="Dihydrofolate reductase"/>
    <property type="match status" value="1"/>
</dbReference>
<dbReference type="Gene3D" id="3.40.430.10">
    <property type="entry name" value="Dihydrofolate Reductase, subunit A"/>
    <property type="match status" value="1"/>
</dbReference>
<dbReference type="InterPro" id="IPR012259">
    <property type="entry name" value="DHFR"/>
</dbReference>
<dbReference type="InterPro" id="IPR024072">
    <property type="entry name" value="DHFR-like_dom_sf"/>
</dbReference>
<dbReference type="InterPro" id="IPR017925">
    <property type="entry name" value="DHFR_CS"/>
</dbReference>
<dbReference type="InterPro" id="IPR001796">
    <property type="entry name" value="DHFR_dom"/>
</dbReference>
<dbReference type="PANTHER" id="PTHR48069">
    <property type="entry name" value="DIHYDROFOLATE REDUCTASE"/>
    <property type="match status" value="1"/>
</dbReference>
<dbReference type="PANTHER" id="PTHR48069:SF6">
    <property type="entry name" value="DIHYDROFOLATE REDUCTASE"/>
    <property type="match status" value="1"/>
</dbReference>
<dbReference type="Pfam" id="PF00186">
    <property type="entry name" value="DHFR_1"/>
    <property type="match status" value="1"/>
</dbReference>
<dbReference type="PRINTS" id="PR00070">
    <property type="entry name" value="DHFR"/>
</dbReference>
<dbReference type="SUPFAM" id="SSF53597">
    <property type="entry name" value="Dihydrofolate reductase-like"/>
    <property type="match status" value="1"/>
</dbReference>
<dbReference type="PROSITE" id="PS00075">
    <property type="entry name" value="DHFR_1"/>
    <property type="match status" value="1"/>
</dbReference>
<dbReference type="PROSITE" id="PS51330">
    <property type="entry name" value="DHFR_2"/>
    <property type="match status" value="1"/>
</dbReference>
<reference key="1">
    <citation type="journal article" date="1982" name="J. Biol. Chem.">
        <title>Structure of amplified normal and variant dihydrofolate reductase genes in mouse sarcoma S180 cells.</title>
        <authorList>
            <person name="Crouse G.F."/>
            <person name="Simonsen C.C."/>
            <person name="McEwan R.N."/>
            <person name="Schimke R.T."/>
        </authorList>
    </citation>
    <scope>NUCLEOTIDE SEQUENCE [GENOMIC DNA]</scope>
</reference>
<reference key="2">
    <citation type="journal article" date="1983" name="Proc. Natl. Acad. Sci. U.S.A.">
        <title>Isolation and expression of an altered mouse dihydrofolate reductase cDNA.</title>
        <authorList>
            <person name="Simonsen C.C."/>
            <person name="Levinson A.D."/>
        </authorList>
    </citation>
    <scope>NUCLEOTIDE SEQUENCE [MRNA]</scope>
</reference>
<reference key="3">
    <citation type="journal article" date="1990" name="Nucleic Acids Res.">
        <title>Isolation and characterization of a variant dihydrofolate reductase cDNA from methotrexate-resistant murine L5178Y cells.</title>
        <authorList>
            <person name="McIvor R.S."/>
            <person name="Simonsen C.C."/>
        </authorList>
    </citation>
    <scope>NUCLEOTIDE SEQUENCE [MRNA]</scope>
</reference>
<reference key="4">
    <citation type="journal article" date="2004" name="Genome Res.">
        <title>The status, quality, and expansion of the NIH full-length cDNA project: the Mammalian Gene Collection (MGC).</title>
        <authorList>
            <consortium name="The MGC Project Team"/>
        </authorList>
    </citation>
    <scope>NUCLEOTIDE SEQUENCE [LARGE SCALE MRNA]</scope>
    <source>
        <strain>FVB/N</strain>
        <tissue>Mammary gland</tissue>
    </source>
</reference>
<reference key="5">
    <citation type="journal article" date="1979" name="J. Biol. Chem.">
        <title>The amino acid sequence of dihydrofolate reductase from the mouse lymphoma L1210.</title>
        <authorList>
            <person name="Stone D."/>
            <person name="Paterson S.J."/>
            <person name="Raper J.H."/>
            <person name="Phillips A.W."/>
        </authorList>
    </citation>
    <scope>PROTEIN SEQUENCE OF 2-187</scope>
    <source>
        <tissue>Lymphoma</tissue>
    </source>
</reference>
<reference key="6">
    <citation type="journal article" date="1985" name="J. Biol. Chem.">
        <title>Heterogeneity at the 5' termini of mouse dihydrofolate reductase mRNAs. Evidence for multiple promoter regions.</title>
        <authorList>
            <person name="McGrogan M."/>
            <person name="Simonsen C.C."/>
            <person name="Smouse D.T."/>
            <person name="Farnham P.J."/>
            <person name="Schimke R.T."/>
        </authorList>
    </citation>
    <scope>NUCLEOTIDE SEQUENCE [GENOMIC DNA] OF 1-28</scope>
</reference>
<reference key="7">
    <citation type="journal article" date="1980" name="Cell">
        <title>Structure and genomic organization of the mouse dihydrofolate reductase gene.</title>
        <authorList>
            <person name="Nunberg J.H."/>
            <person name="Kaufman R.J."/>
            <person name="Chang A.C.Y."/>
            <person name="Cohen S.N."/>
            <person name="Schimke R.T."/>
        </authorList>
    </citation>
    <scope>NUCLEOTIDE SEQUENCE [GENOMIC DNA / MRNA] OF 1-24; 50-127 AND 154-187</scope>
</reference>
<reference key="8">
    <citation type="journal article" date="1978" name="Nature">
        <title>Phenotypic expression in E. coli of a DNA sequence coding for mouse dihydrofolate reductase.</title>
        <authorList>
            <person name="Chang A.C.Y."/>
            <person name="Nunberg J.H."/>
            <person name="Kaufman R.J."/>
            <person name="Erlich H.A."/>
            <person name="Schimke R.T."/>
            <person name="Cohen S.N."/>
        </authorList>
    </citation>
    <scope>NUCLEOTIDE SEQUENCE [MRNA] OF 1-24 AND 50-127</scope>
</reference>
<reference key="9">
    <citation type="journal article" date="1982" name="J. Biol. Chem.">
        <title>Nucleotide sequence surrounding multiple polyadenylation sites in the mouse dihydrofolate reductase gene.</title>
        <authorList>
            <person name="Setzer D.R."/>
            <person name="McGrogan M."/>
            <person name="Schimke R.T."/>
        </authorList>
    </citation>
    <scope>NUCLEOTIDE SEQUENCE [GENOMIC DNA] OF 163-187</scope>
</reference>
<reference key="10">
    <citation type="journal article" date="2010" name="Cell">
        <title>A tissue-specific atlas of mouse protein phosphorylation and expression.</title>
        <authorList>
            <person name="Huttlin E.L."/>
            <person name="Jedrychowski M.P."/>
            <person name="Elias J.E."/>
            <person name="Goswami T."/>
            <person name="Rad R."/>
            <person name="Beausoleil S.A."/>
            <person name="Villen J."/>
            <person name="Haas W."/>
            <person name="Sowa M.E."/>
            <person name="Gygi S.P."/>
        </authorList>
    </citation>
    <scope>IDENTIFICATION BY MASS SPECTROMETRY [LARGE SCALE ANALYSIS]</scope>
    <source>
        <tissue>Brain</tissue>
        <tissue>Heart</tissue>
        <tissue>Kidney</tissue>
        <tissue>Liver</tissue>
        <tissue>Lung</tissue>
        <tissue>Pancreas</tissue>
        <tissue>Spleen</tissue>
        <tissue>Testis</tissue>
    </source>
</reference>
<reference key="11">
    <citation type="journal article" date="2013" name="Mol. Cell">
        <title>SIRT5-mediated lysine desuccinylation impacts diverse metabolic pathways.</title>
        <authorList>
            <person name="Park J."/>
            <person name="Chen Y."/>
            <person name="Tishkoff D.X."/>
            <person name="Peng C."/>
            <person name="Tan M."/>
            <person name="Dai L."/>
            <person name="Xie Z."/>
            <person name="Zhang Y."/>
            <person name="Zwaans B.M."/>
            <person name="Skinner M.E."/>
            <person name="Lombard D.B."/>
            <person name="Zhao Y."/>
        </authorList>
    </citation>
    <scope>ACETYLATION [LARGE SCALE ANALYSIS] AT LYS-33</scope>
    <scope>SUCCINYLATION [LARGE SCALE ANALYSIS] AT LYS-33</scope>
    <scope>IDENTIFICATION BY MASS SPECTROMETRY [LARGE SCALE ANALYSIS]</scope>
    <source>
        <tissue>Embryonic fibroblast</tissue>
        <tissue>Liver</tissue>
    </source>
</reference>
<reference key="12">
    <citation type="journal article" date="2015" name="FEBS Lett.">
        <title>An active second dihydrofolate reductase enzyme is not a feature of rat and mouse, but they do have activity in their mitochondria.</title>
        <authorList>
            <person name="Hughes L."/>
            <person name="Carton R."/>
            <person name="Minguzzi S."/>
            <person name="McEntee G."/>
            <person name="Deinum E.E."/>
            <person name="O'Connell M.J."/>
            <person name="Parle-McDermott A."/>
        </authorList>
    </citation>
    <scope>SUBCELLULAR LOCATION</scope>
    <scope>CATALYTIC ACTIVITY</scope>
    <scope>FUNCTION</scope>
</reference>
<reference key="13">
    <citation type="journal article" date="2005" name="Acta Crystallogr. D">
        <title>Understanding the role of Leu22 variants in methotrexate resistance: comparison of wild-type and Leu22Arg variant mouse and human dihydrofolate reductase ternary crystal complexes with methotrexate and NADPH.</title>
        <authorList>
            <person name="Cody V."/>
            <person name="Luft J.R."/>
            <person name="Pangborn W."/>
        </authorList>
    </citation>
    <scope>X-RAY CRYSTALLOGRAPHY (2.50 ANGSTROMS) OF 2-187 IN COMPLEX WITH NADP AND METHOTREXATE</scope>
    <scope>CHARACTERIZATION OF METHOTREXATE-RESISTANT VARIANT ARG-23</scope>
</reference>
<reference key="14">
    <citation type="journal article" date="2006" name="Proteins">
        <title>New insights into DHFR interactions: analysis of Pneumocystis carinii and mouse DHFR complexes with NADPH and two highly potent 5-(omega-carboxy(alkyloxy) trimethoprim derivatives reveals conformational correlations with activity and novel parallel ring stacking interactions.</title>
        <authorList>
            <person name="Cody V."/>
            <person name="Pace J."/>
            <person name="Chisum K."/>
            <person name="Rosowsky A."/>
        </authorList>
    </citation>
    <scope>X-RAY CRYSTALLOGRAPHY (2.00 ANGSTROMS) OF 2-187 IN COMPLEX WITH NADP AND SYNTHETIC INHIBITOR</scope>
</reference>
<reference key="15">
    <citation type="journal article" date="2008" name="Acta Crystallogr. D">
        <title>Structural analysis of a holoenzyme complex of mouse dihydrofolate reductase with NADPH and a ternary complex with the potent and selective inhibitor 2,4-diamino-6-(2'-hydroxydibenz[b,f]azepin-5-yl)methylpteridine.</title>
        <authorList>
            <person name="Cody V."/>
            <person name="Pace J."/>
            <person name="Rosowsky A."/>
        </authorList>
    </citation>
    <scope>X-RAY CRYSTALLOGRAPHY (1.40 ANGSTROMS) IN COMPLEXES WITH NADP AND SYNTHETIC INHIBITOR</scope>
</reference>
<reference key="16">
    <citation type="journal article" date="2009" name="Bioorg. Med. Chem.">
        <title>Design, synthesis, and X-ray crystal structures of 2,4-diaminofuro[2,3-d]pyrimidines as multireceptor tyrosine kinase and dihydrofolate reductase inhibitors.</title>
        <authorList>
            <person name="Gangjee A."/>
            <person name="Li W."/>
            <person name="Lin L."/>
            <person name="Zeng Y."/>
            <person name="Ihnat M."/>
            <person name="Warnke L.A."/>
            <person name="Green D.W."/>
            <person name="Cody V."/>
            <person name="Pace J."/>
            <person name="Queener S.F."/>
        </authorList>
    </citation>
    <scope>X-RAY CRYSTALLOGRAPHY (1.60 ANGSTROMS) OF 2-187 IN COMPLEXES WITH NADP AND SYNTHETIC INHIBITOR</scope>
    <scope>CATALYTIC ACTIVITY</scope>
</reference>
<accession>P00375</accession>
<accession>P70693</accession>
<accession>Q61485</accession>
<accession>Q61487</accession>
<accession>Q61579</accession>
<name>DYR_MOUSE</name>